<evidence type="ECO:0000250" key="1"/>
<evidence type="ECO:0000255" key="2">
    <source>
        <dbReference type="HAMAP-Rule" id="MF_00118"/>
    </source>
</evidence>
<accession>B1IPW0</accession>
<reference key="1">
    <citation type="submission" date="2008-02" db="EMBL/GenBank/DDBJ databases">
        <title>Complete sequence of Escherichia coli C str. ATCC 8739.</title>
        <authorList>
            <person name="Copeland A."/>
            <person name="Lucas S."/>
            <person name="Lapidus A."/>
            <person name="Glavina del Rio T."/>
            <person name="Dalin E."/>
            <person name="Tice H."/>
            <person name="Bruce D."/>
            <person name="Goodwin L."/>
            <person name="Pitluck S."/>
            <person name="Kiss H."/>
            <person name="Brettin T."/>
            <person name="Detter J.C."/>
            <person name="Han C."/>
            <person name="Kuske C.R."/>
            <person name="Schmutz J."/>
            <person name="Larimer F."/>
            <person name="Land M."/>
            <person name="Hauser L."/>
            <person name="Kyrpides N."/>
            <person name="Mikhailova N."/>
            <person name="Ingram L."/>
            <person name="Richardson P."/>
        </authorList>
    </citation>
    <scope>NUCLEOTIDE SEQUENCE [LARGE SCALE GENOMIC DNA]</scope>
    <source>
        <strain>ATCC 8739 / DSM 1576 / NBRC 3972 / NCIMB 8545 / WDCM 00012 / Crooks</strain>
    </source>
</reference>
<comment type="function">
    <text evidence="2">GTP hydrolase that promotes the GTP-dependent binding of aminoacyl-tRNA to the A-site of ribosomes during protein biosynthesis.</text>
</comment>
<comment type="catalytic activity">
    <reaction evidence="2">
        <text>GTP + H2O = GDP + phosphate + H(+)</text>
        <dbReference type="Rhea" id="RHEA:19669"/>
        <dbReference type="ChEBI" id="CHEBI:15377"/>
        <dbReference type="ChEBI" id="CHEBI:15378"/>
        <dbReference type="ChEBI" id="CHEBI:37565"/>
        <dbReference type="ChEBI" id="CHEBI:43474"/>
        <dbReference type="ChEBI" id="CHEBI:58189"/>
        <dbReference type="EC" id="3.6.5.3"/>
    </reaction>
    <physiologicalReaction direction="left-to-right" evidence="2">
        <dbReference type="Rhea" id="RHEA:19670"/>
    </physiologicalReaction>
</comment>
<comment type="subunit">
    <text evidence="2">Monomer.</text>
</comment>
<comment type="subcellular location">
    <subcellularLocation>
        <location evidence="2">Cytoplasm</location>
    </subcellularLocation>
</comment>
<comment type="similarity">
    <text evidence="2">Belongs to the TRAFAC class translation factor GTPase superfamily. Classic translation factor GTPase family. EF-Tu/EF-1A subfamily.</text>
</comment>
<keyword id="KW-0963">Cytoplasm</keyword>
<keyword id="KW-0251">Elongation factor</keyword>
<keyword id="KW-0342">GTP-binding</keyword>
<keyword id="KW-0378">Hydrolase</keyword>
<keyword id="KW-0460">Magnesium</keyword>
<keyword id="KW-0479">Metal-binding</keyword>
<keyword id="KW-0547">Nucleotide-binding</keyword>
<keyword id="KW-0648">Protein biosynthesis</keyword>
<gene>
    <name evidence="2" type="primary">tuf1</name>
    <name type="ordered locus">EcolC_0374</name>
</gene>
<feature type="chain" id="PRO_0000337382" description="Elongation factor Tu 1">
    <location>
        <begin position="1"/>
        <end position="394"/>
    </location>
</feature>
<feature type="domain" description="tr-type G">
    <location>
        <begin position="10"/>
        <end position="204"/>
    </location>
</feature>
<feature type="region of interest" description="G1" evidence="1">
    <location>
        <begin position="19"/>
        <end position="26"/>
    </location>
</feature>
<feature type="region of interest" description="G2" evidence="1">
    <location>
        <begin position="60"/>
        <end position="64"/>
    </location>
</feature>
<feature type="region of interest" description="G3" evidence="1">
    <location>
        <begin position="81"/>
        <end position="84"/>
    </location>
</feature>
<feature type="region of interest" description="G4" evidence="1">
    <location>
        <begin position="136"/>
        <end position="139"/>
    </location>
</feature>
<feature type="region of interest" description="G5" evidence="1">
    <location>
        <begin position="174"/>
        <end position="176"/>
    </location>
</feature>
<feature type="binding site" evidence="2">
    <location>
        <begin position="19"/>
        <end position="26"/>
    </location>
    <ligand>
        <name>GTP</name>
        <dbReference type="ChEBI" id="CHEBI:37565"/>
    </ligand>
</feature>
<feature type="binding site" evidence="2">
    <location>
        <position position="26"/>
    </location>
    <ligand>
        <name>Mg(2+)</name>
        <dbReference type="ChEBI" id="CHEBI:18420"/>
    </ligand>
</feature>
<feature type="binding site" evidence="2">
    <location>
        <begin position="81"/>
        <end position="85"/>
    </location>
    <ligand>
        <name>GTP</name>
        <dbReference type="ChEBI" id="CHEBI:37565"/>
    </ligand>
</feature>
<feature type="binding site" evidence="2">
    <location>
        <begin position="136"/>
        <end position="139"/>
    </location>
    <ligand>
        <name>GTP</name>
        <dbReference type="ChEBI" id="CHEBI:37565"/>
    </ligand>
</feature>
<organism>
    <name type="scientific">Escherichia coli (strain ATCC 8739 / DSM 1576 / NBRC 3972 / NCIMB 8545 / WDCM 00012 / Crooks)</name>
    <dbReference type="NCBI Taxonomy" id="481805"/>
    <lineage>
        <taxon>Bacteria</taxon>
        <taxon>Pseudomonadati</taxon>
        <taxon>Pseudomonadota</taxon>
        <taxon>Gammaproteobacteria</taxon>
        <taxon>Enterobacterales</taxon>
        <taxon>Enterobacteriaceae</taxon>
        <taxon>Escherichia</taxon>
    </lineage>
</organism>
<sequence length="394" mass="43284">MSKEKFERTKPHVNVGTIGHVDHGKTTLTAAITTVLAKTYGGAARAFDQIDNAPEEKARGITINTSHVEYDTPTRHYAHVDCPGHADYVKNMITGAAQMDGAILVVAATDGPMPQTREHILLGRQVGVPYIIVFLNKCDMVDDEELLELVEMEVRELLSQYDFPGDDTPIVRGSALKALEGDAEWEAKILELAGFLDSYIPEPERAIDKPFLLPIEDVFSISGRGTVVTGRVERGIIKVGEEVEIVGIKETQKSTCTGVEMFRKLLDEGRAGENVGVLLRGIKREEIERGQVLAKPGTIKPHTKFESEVYILSKDEGGRHTPFFKGYRPQFYFRTTDVTGTIELPEGVEMVMPGDNIKMVVTLIHPIAMDDGLRFAIREGGRTVGAGVVAKVLG</sequence>
<name>EFTU1_ECOLC</name>
<proteinExistence type="inferred from homology"/>
<dbReference type="EC" id="3.6.5.3" evidence="2"/>
<dbReference type="EMBL" id="CP000946">
    <property type="protein sequence ID" value="ACA76052.1"/>
    <property type="molecule type" value="Genomic_DNA"/>
</dbReference>
<dbReference type="SMR" id="B1IPW0"/>
<dbReference type="KEGG" id="ecl:EcolC_0374"/>
<dbReference type="HOGENOM" id="CLU_007265_0_2_6"/>
<dbReference type="GO" id="GO:0005829">
    <property type="term" value="C:cytosol"/>
    <property type="evidence" value="ECO:0007669"/>
    <property type="project" value="TreeGrafter"/>
</dbReference>
<dbReference type="GO" id="GO:0005525">
    <property type="term" value="F:GTP binding"/>
    <property type="evidence" value="ECO:0007669"/>
    <property type="project" value="UniProtKB-UniRule"/>
</dbReference>
<dbReference type="GO" id="GO:0003924">
    <property type="term" value="F:GTPase activity"/>
    <property type="evidence" value="ECO:0007669"/>
    <property type="project" value="InterPro"/>
</dbReference>
<dbReference type="GO" id="GO:0097216">
    <property type="term" value="F:guanosine tetraphosphate binding"/>
    <property type="evidence" value="ECO:0007669"/>
    <property type="project" value="UniProtKB-ARBA"/>
</dbReference>
<dbReference type="GO" id="GO:0003746">
    <property type="term" value="F:translation elongation factor activity"/>
    <property type="evidence" value="ECO:0007669"/>
    <property type="project" value="UniProtKB-UniRule"/>
</dbReference>
<dbReference type="CDD" id="cd01884">
    <property type="entry name" value="EF_Tu"/>
    <property type="match status" value="1"/>
</dbReference>
<dbReference type="CDD" id="cd03697">
    <property type="entry name" value="EFTU_II"/>
    <property type="match status" value="1"/>
</dbReference>
<dbReference type="CDD" id="cd03707">
    <property type="entry name" value="EFTU_III"/>
    <property type="match status" value="1"/>
</dbReference>
<dbReference type="FunFam" id="2.40.30.10:FF:000001">
    <property type="entry name" value="Elongation factor Tu"/>
    <property type="match status" value="1"/>
</dbReference>
<dbReference type="FunFam" id="3.40.50.300:FF:000003">
    <property type="entry name" value="Elongation factor Tu"/>
    <property type="match status" value="1"/>
</dbReference>
<dbReference type="Gene3D" id="3.40.50.300">
    <property type="entry name" value="P-loop containing nucleotide triphosphate hydrolases"/>
    <property type="match status" value="1"/>
</dbReference>
<dbReference type="Gene3D" id="2.40.30.10">
    <property type="entry name" value="Translation factors"/>
    <property type="match status" value="2"/>
</dbReference>
<dbReference type="HAMAP" id="MF_00118_B">
    <property type="entry name" value="EF_Tu_B"/>
    <property type="match status" value="1"/>
</dbReference>
<dbReference type="InterPro" id="IPR041709">
    <property type="entry name" value="EF-Tu_GTP-bd"/>
</dbReference>
<dbReference type="InterPro" id="IPR050055">
    <property type="entry name" value="EF-Tu_GTPase"/>
</dbReference>
<dbReference type="InterPro" id="IPR004161">
    <property type="entry name" value="EFTu-like_2"/>
</dbReference>
<dbReference type="InterPro" id="IPR033720">
    <property type="entry name" value="EFTU_2"/>
</dbReference>
<dbReference type="InterPro" id="IPR031157">
    <property type="entry name" value="G_TR_CS"/>
</dbReference>
<dbReference type="InterPro" id="IPR027417">
    <property type="entry name" value="P-loop_NTPase"/>
</dbReference>
<dbReference type="InterPro" id="IPR005225">
    <property type="entry name" value="Small_GTP-bd"/>
</dbReference>
<dbReference type="InterPro" id="IPR000795">
    <property type="entry name" value="T_Tr_GTP-bd_dom"/>
</dbReference>
<dbReference type="InterPro" id="IPR009000">
    <property type="entry name" value="Transl_B-barrel_sf"/>
</dbReference>
<dbReference type="InterPro" id="IPR009001">
    <property type="entry name" value="Transl_elong_EF1A/Init_IF2_C"/>
</dbReference>
<dbReference type="InterPro" id="IPR004541">
    <property type="entry name" value="Transl_elong_EFTu/EF1A_bac/org"/>
</dbReference>
<dbReference type="InterPro" id="IPR004160">
    <property type="entry name" value="Transl_elong_EFTu/EF1A_C"/>
</dbReference>
<dbReference type="NCBIfam" id="TIGR00485">
    <property type="entry name" value="EF-Tu"/>
    <property type="match status" value="1"/>
</dbReference>
<dbReference type="NCBIfam" id="NF000766">
    <property type="entry name" value="PRK00049.1"/>
    <property type="match status" value="1"/>
</dbReference>
<dbReference type="NCBIfam" id="NF009372">
    <property type="entry name" value="PRK12735.1"/>
    <property type="match status" value="1"/>
</dbReference>
<dbReference type="NCBIfam" id="NF009373">
    <property type="entry name" value="PRK12736.1"/>
    <property type="match status" value="1"/>
</dbReference>
<dbReference type="NCBIfam" id="TIGR00231">
    <property type="entry name" value="small_GTP"/>
    <property type="match status" value="1"/>
</dbReference>
<dbReference type="PANTHER" id="PTHR43721:SF22">
    <property type="entry name" value="ELONGATION FACTOR TU, MITOCHONDRIAL"/>
    <property type="match status" value="1"/>
</dbReference>
<dbReference type="PANTHER" id="PTHR43721">
    <property type="entry name" value="ELONGATION FACTOR TU-RELATED"/>
    <property type="match status" value="1"/>
</dbReference>
<dbReference type="Pfam" id="PF00009">
    <property type="entry name" value="GTP_EFTU"/>
    <property type="match status" value="1"/>
</dbReference>
<dbReference type="Pfam" id="PF03144">
    <property type="entry name" value="GTP_EFTU_D2"/>
    <property type="match status" value="1"/>
</dbReference>
<dbReference type="Pfam" id="PF03143">
    <property type="entry name" value="GTP_EFTU_D3"/>
    <property type="match status" value="1"/>
</dbReference>
<dbReference type="PRINTS" id="PR00315">
    <property type="entry name" value="ELONGATNFCT"/>
</dbReference>
<dbReference type="SUPFAM" id="SSF50465">
    <property type="entry name" value="EF-Tu/eEF-1alpha/eIF2-gamma C-terminal domain"/>
    <property type="match status" value="1"/>
</dbReference>
<dbReference type="SUPFAM" id="SSF52540">
    <property type="entry name" value="P-loop containing nucleoside triphosphate hydrolases"/>
    <property type="match status" value="1"/>
</dbReference>
<dbReference type="SUPFAM" id="SSF50447">
    <property type="entry name" value="Translation proteins"/>
    <property type="match status" value="1"/>
</dbReference>
<dbReference type="PROSITE" id="PS00301">
    <property type="entry name" value="G_TR_1"/>
    <property type="match status" value="1"/>
</dbReference>
<dbReference type="PROSITE" id="PS51722">
    <property type="entry name" value="G_TR_2"/>
    <property type="match status" value="1"/>
</dbReference>
<protein>
    <recommendedName>
        <fullName evidence="2">Elongation factor Tu 1</fullName>
        <shortName evidence="2">EF-Tu 1</shortName>
        <ecNumber evidence="2">3.6.5.3</ecNumber>
    </recommendedName>
</protein>